<reference key="1">
    <citation type="journal article" date="2007" name="PLoS Biol.">
        <title>Evolution of symbiotic bacteria in the distal human intestine.</title>
        <authorList>
            <person name="Xu J."/>
            <person name="Mahowald M.A."/>
            <person name="Ley R.E."/>
            <person name="Lozupone C.A."/>
            <person name="Hamady M."/>
            <person name="Martens E.C."/>
            <person name="Henrissat B."/>
            <person name="Coutinho P.M."/>
            <person name="Minx P."/>
            <person name="Latreille P."/>
            <person name="Cordum H."/>
            <person name="Van Brunt A."/>
            <person name="Kim K."/>
            <person name="Fulton R.S."/>
            <person name="Fulton L.A."/>
            <person name="Clifton S.W."/>
            <person name="Wilson R.K."/>
            <person name="Knight R.D."/>
            <person name="Gordon J.I."/>
        </authorList>
    </citation>
    <scope>NUCLEOTIDE SEQUENCE [LARGE SCALE GENOMIC DNA]</scope>
    <source>
        <strain>ATCC 8503 / DSM 20701 / CIP 104284 / JCM 5825 / NCTC 11152</strain>
    </source>
</reference>
<accession>A6LF39</accession>
<feature type="chain" id="PRO_1000056646" description="Ribosomal RNA small subunit methyltransferase A">
    <location>
        <begin position="1"/>
        <end position="266"/>
    </location>
</feature>
<feature type="binding site" evidence="1">
    <location>
        <position position="13"/>
    </location>
    <ligand>
        <name>S-adenosyl-L-methionine</name>
        <dbReference type="ChEBI" id="CHEBI:59789"/>
    </ligand>
</feature>
<feature type="binding site" evidence="1">
    <location>
        <position position="15"/>
    </location>
    <ligand>
        <name>S-adenosyl-L-methionine</name>
        <dbReference type="ChEBI" id="CHEBI:59789"/>
    </ligand>
</feature>
<feature type="binding site" evidence="1">
    <location>
        <position position="40"/>
    </location>
    <ligand>
        <name>S-adenosyl-L-methionine</name>
        <dbReference type="ChEBI" id="CHEBI:59789"/>
    </ligand>
</feature>
<feature type="binding site" evidence="1">
    <location>
        <position position="61"/>
    </location>
    <ligand>
        <name>S-adenosyl-L-methionine</name>
        <dbReference type="ChEBI" id="CHEBI:59789"/>
    </ligand>
</feature>
<feature type="binding site" evidence="1">
    <location>
        <position position="85"/>
    </location>
    <ligand>
        <name>S-adenosyl-L-methionine</name>
        <dbReference type="ChEBI" id="CHEBI:59789"/>
    </ligand>
</feature>
<feature type="binding site" evidence="1">
    <location>
        <position position="104"/>
    </location>
    <ligand>
        <name>S-adenosyl-L-methionine</name>
        <dbReference type="ChEBI" id="CHEBI:59789"/>
    </ligand>
</feature>
<keyword id="KW-0963">Cytoplasm</keyword>
<keyword id="KW-0489">Methyltransferase</keyword>
<keyword id="KW-1185">Reference proteome</keyword>
<keyword id="KW-0694">RNA-binding</keyword>
<keyword id="KW-0698">rRNA processing</keyword>
<keyword id="KW-0949">S-adenosyl-L-methionine</keyword>
<keyword id="KW-0808">Transferase</keyword>
<proteinExistence type="inferred from homology"/>
<dbReference type="EC" id="2.1.1.182" evidence="1"/>
<dbReference type="EMBL" id="CP000140">
    <property type="protein sequence ID" value="ABR44303.1"/>
    <property type="molecule type" value="Genomic_DNA"/>
</dbReference>
<dbReference type="RefSeq" id="WP_011966906.1">
    <property type="nucleotide sequence ID" value="NC_009615.1"/>
</dbReference>
<dbReference type="SMR" id="A6LF39"/>
<dbReference type="STRING" id="435591.BDI_2584"/>
<dbReference type="PaxDb" id="435591-BDI_2584"/>
<dbReference type="KEGG" id="pdi:BDI_2584"/>
<dbReference type="PATRIC" id="fig|435591.13.peg.2562"/>
<dbReference type="eggNOG" id="COG0030">
    <property type="taxonomic scope" value="Bacteria"/>
</dbReference>
<dbReference type="HOGENOM" id="CLU_041220_0_1_10"/>
<dbReference type="BioCyc" id="PDIS435591:G1G5A-2654-MONOMER"/>
<dbReference type="Proteomes" id="UP000000566">
    <property type="component" value="Chromosome"/>
</dbReference>
<dbReference type="GO" id="GO:0005829">
    <property type="term" value="C:cytosol"/>
    <property type="evidence" value="ECO:0007669"/>
    <property type="project" value="TreeGrafter"/>
</dbReference>
<dbReference type="GO" id="GO:0052908">
    <property type="term" value="F:16S rRNA (adenine(1518)-N(6)/adenine(1519)-N(6))-dimethyltransferase activity"/>
    <property type="evidence" value="ECO:0007669"/>
    <property type="project" value="UniProtKB-EC"/>
</dbReference>
<dbReference type="GO" id="GO:0003723">
    <property type="term" value="F:RNA binding"/>
    <property type="evidence" value="ECO:0007669"/>
    <property type="project" value="UniProtKB-KW"/>
</dbReference>
<dbReference type="CDD" id="cd02440">
    <property type="entry name" value="AdoMet_MTases"/>
    <property type="match status" value="1"/>
</dbReference>
<dbReference type="FunFam" id="1.10.8.100:FF:000001">
    <property type="entry name" value="Ribosomal RNA small subunit methyltransferase A"/>
    <property type="match status" value="1"/>
</dbReference>
<dbReference type="FunFam" id="3.40.50.150:FF:000157">
    <property type="entry name" value="Ribosomal RNA small subunit methyltransferase A"/>
    <property type="match status" value="1"/>
</dbReference>
<dbReference type="Gene3D" id="1.10.8.100">
    <property type="entry name" value="Ribosomal RNA adenine dimethylase-like, domain 2"/>
    <property type="match status" value="1"/>
</dbReference>
<dbReference type="Gene3D" id="3.40.50.150">
    <property type="entry name" value="Vaccinia Virus protein VP39"/>
    <property type="match status" value="1"/>
</dbReference>
<dbReference type="HAMAP" id="MF_00607">
    <property type="entry name" value="16SrRNA_methyltr_A"/>
    <property type="match status" value="1"/>
</dbReference>
<dbReference type="InterPro" id="IPR001737">
    <property type="entry name" value="KsgA/Erm"/>
</dbReference>
<dbReference type="InterPro" id="IPR023165">
    <property type="entry name" value="rRNA_Ade_diMease-like_C"/>
</dbReference>
<dbReference type="InterPro" id="IPR020596">
    <property type="entry name" value="rRNA_Ade_Mease_Trfase_CS"/>
</dbReference>
<dbReference type="InterPro" id="IPR020598">
    <property type="entry name" value="rRNA_Ade_methylase_Trfase_N"/>
</dbReference>
<dbReference type="InterPro" id="IPR011530">
    <property type="entry name" value="rRNA_adenine_dimethylase"/>
</dbReference>
<dbReference type="InterPro" id="IPR029063">
    <property type="entry name" value="SAM-dependent_MTases_sf"/>
</dbReference>
<dbReference type="NCBIfam" id="TIGR00755">
    <property type="entry name" value="ksgA"/>
    <property type="match status" value="1"/>
</dbReference>
<dbReference type="PANTHER" id="PTHR11727">
    <property type="entry name" value="DIMETHYLADENOSINE TRANSFERASE"/>
    <property type="match status" value="1"/>
</dbReference>
<dbReference type="PANTHER" id="PTHR11727:SF7">
    <property type="entry name" value="DIMETHYLADENOSINE TRANSFERASE-RELATED"/>
    <property type="match status" value="1"/>
</dbReference>
<dbReference type="Pfam" id="PF00398">
    <property type="entry name" value="RrnaAD"/>
    <property type="match status" value="1"/>
</dbReference>
<dbReference type="SMART" id="SM00650">
    <property type="entry name" value="rADc"/>
    <property type="match status" value="1"/>
</dbReference>
<dbReference type="SUPFAM" id="SSF53335">
    <property type="entry name" value="S-adenosyl-L-methionine-dependent methyltransferases"/>
    <property type="match status" value="1"/>
</dbReference>
<dbReference type="PROSITE" id="PS01131">
    <property type="entry name" value="RRNA_A_DIMETH"/>
    <property type="match status" value="1"/>
</dbReference>
<dbReference type="PROSITE" id="PS51689">
    <property type="entry name" value="SAM_RNA_A_N6_MT"/>
    <property type="match status" value="1"/>
</dbReference>
<name>RSMA_PARD8</name>
<gene>
    <name evidence="1" type="primary">rsmA</name>
    <name evidence="1" type="synonym">ksgA</name>
    <name type="ordered locus">BDI_2584</name>
</gene>
<evidence type="ECO:0000255" key="1">
    <source>
        <dbReference type="HAMAP-Rule" id="MF_00607"/>
    </source>
</evidence>
<sequence length="266" mass="30226">MRLVKPKKALGQHFLKDLQIAQRIADTLDTFKSLPVLEIGPGMGVLTQFLLEAGHDLTVVELDMESVDYLNQNFPDLKGRIIAEDFLKLDLSKLFPGQFCVIGNYPYNISSQIFFKVLDYKDQIPCCSGMLQKEVAERLAAGPGSKTYGILSVLLQAWYDVEYLFTVSEKVFDPPPKVKSAVLKMTRNDRKELGCDEKLFKTVVKTSFNQRRKTLRNSMKPLLGKDCPDYALPIFDKRPEQLSMEQFVELTLISQKHLEKQAGDVL</sequence>
<protein>
    <recommendedName>
        <fullName evidence="1">Ribosomal RNA small subunit methyltransferase A</fullName>
        <ecNumber evidence="1">2.1.1.182</ecNumber>
    </recommendedName>
    <alternativeName>
        <fullName evidence="1">16S rRNA (adenine(1518)-N(6)/adenine(1519)-N(6))-dimethyltransferase</fullName>
    </alternativeName>
    <alternativeName>
        <fullName evidence="1">16S rRNA dimethyladenosine transferase</fullName>
    </alternativeName>
    <alternativeName>
        <fullName evidence="1">16S rRNA dimethylase</fullName>
    </alternativeName>
    <alternativeName>
        <fullName evidence="1">S-adenosylmethionine-6-N', N'-adenosyl(rRNA) dimethyltransferase</fullName>
    </alternativeName>
</protein>
<comment type="function">
    <text evidence="1">Specifically dimethylates two adjacent adenosines (A1518 and A1519) in the loop of a conserved hairpin near the 3'-end of 16S rRNA in the 30S particle. May play a critical role in biogenesis of 30S subunits.</text>
</comment>
<comment type="catalytic activity">
    <reaction evidence="1">
        <text>adenosine(1518)/adenosine(1519) in 16S rRNA + 4 S-adenosyl-L-methionine = N(6)-dimethyladenosine(1518)/N(6)-dimethyladenosine(1519) in 16S rRNA + 4 S-adenosyl-L-homocysteine + 4 H(+)</text>
        <dbReference type="Rhea" id="RHEA:19609"/>
        <dbReference type="Rhea" id="RHEA-COMP:10232"/>
        <dbReference type="Rhea" id="RHEA-COMP:10233"/>
        <dbReference type="ChEBI" id="CHEBI:15378"/>
        <dbReference type="ChEBI" id="CHEBI:57856"/>
        <dbReference type="ChEBI" id="CHEBI:59789"/>
        <dbReference type="ChEBI" id="CHEBI:74411"/>
        <dbReference type="ChEBI" id="CHEBI:74493"/>
        <dbReference type="EC" id="2.1.1.182"/>
    </reaction>
</comment>
<comment type="subcellular location">
    <subcellularLocation>
        <location evidence="1">Cytoplasm</location>
    </subcellularLocation>
</comment>
<comment type="similarity">
    <text evidence="1">Belongs to the class I-like SAM-binding methyltransferase superfamily. rRNA adenine N(6)-methyltransferase family. RsmA subfamily.</text>
</comment>
<organism>
    <name type="scientific">Parabacteroides distasonis (strain ATCC 8503 / DSM 20701 / CIP 104284 / JCM 5825 / NCTC 11152)</name>
    <dbReference type="NCBI Taxonomy" id="435591"/>
    <lineage>
        <taxon>Bacteria</taxon>
        <taxon>Pseudomonadati</taxon>
        <taxon>Bacteroidota</taxon>
        <taxon>Bacteroidia</taxon>
        <taxon>Bacteroidales</taxon>
        <taxon>Tannerellaceae</taxon>
        <taxon>Parabacteroides</taxon>
    </lineage>
</organism>